<comment type="function">
    <text>Histones H1 are necessary for the condensation of nucleosome chains into higher-order structures.</text>
</comment>
<comment type="subcellular location">
    <subcellularLocation>
        <location>Nucleus</location>
    </subcellularLocation>
    <subcellularLocation>
        <location>Chromosome</location>
    </subcellularLocation>
</comment>
<comment type="similarity">
    <text evidence="1">Belongs to the histone H1/H5 family.</text>
</comment>
<accession>Q94555</accession>
<keyword id="KW-0158">Chromosome</keyword>
<keyword id="KW-0238">DNA-binding</keyword>
<keyword id="KW-0539">Nucleus</keyword>
<name>H12_DROVI</name>
<feature type="chain" id="PRO_0000195964" description="Histone H1.2">
    <location>
        <begin position="1"/>
        <end position="250"/>
    </location>
</feature>
<feature type="domain" description="H15" evidence="1">
    <location>
        <begin position="44"/>
        <end position="118"/>
    </location>
</feature>
<feature type="region of interest" description="Disordered" evidence="2">
    <location>
        <begin position="1"/>
        <end position="53"/>
    </location>
</feature>
<feature type="region of interest" description="Disordered" evidence="2">
    <location>
        <begin position="101"/>
        <end position="250"/>
    </location>
</feature>
<feature type="compositionally biased region" description="Polar residues" evidence="2">
    <location>
        <begin position="1"/>
        <end position="11"/>
    </location>
</feature>
<feature type="compositionally biased region" description="Low complexity" evidence="2">
    <location>
        <begin position="27"/>
        <end position="42"/>
    </location>
</feature>
<feature type="compositionally biased region" description="Basic and acidic residues" evidence="2">
    <location>
        <begin position="120"/>
        <end position="133"/>
    </location>
</feature>
<feature type="compositionally biased region" description="Low complexity" evidence="2">
    <location>
        <begin position="151"/>
        <end position="161"/>
    </location>
</feature>
<feature type="compositionally biased region" description="Basic and acidic residues" evidence="2">
    <location>
        <begin position="174"/>
        <end position="191"/>
    </location>
</feature>
<feature type="compositionally biased region" description="Low complexity" evidence="2">
    <location>
        <begin position="192"/>
        <end position="211"/>
    </location>
</feature>
<feature type="compositionally biased region" description="Basic residues" evidence="2">
    <location>
        <begin position="212"/>
        <end position="225"/>
    </location>
</feature>
<feature type="compositionally biased region" description="Basic residues" evidence="2">
    <location>
        <begin position="235"/>
        <end position="250"/>
    </location>
</feature>
<organism>
    <name type="scientific">Drosophila virilis</name>
    <name type="common">Fruit fly</name>
    <dbReference type="NCBI Taxonomy" id="7244"/>
    <lineage>
        <taxon>Eukaryota</taxon>
        <taxon>Metazoa</taxon>
        <taxon>Ecdysozoa</taxon>
        <taxon>Arthropoda</taxon>
        <taxon>Hexapoda</taxon>
        <taxon>Insecta</taxon>
        <taxon>Pterygota</taxon>
        <taxon>Neoptera</taxon>
        <taxon>Endopterygota</taxon>
        <taxon>Diptera</taxon>
        <taxon>Brachycera</taxon>
        <taxon>Muscomorpha</taxon>
        <taxon>Ephydroidea</taxon>
        <taxon>Drosophilidae</taxon>
        <taxon>Drosophila</taxon>
    </lineage>
</organism>
<dbReference type="EMBL" id="U67772">
    <property type="protein sequence ID" value="AAB07730.1"/>
    <property type="molecule type" value="Genomic_DNA"/>
</dbReference>
<dbReference type="SMR" id="Q94555"/>
<dbReference type="eggNOG" id="KOG4012">
    <property type="taxonomic scope" value="Eukaryota"/>
</dbReference>
<dbReference type="OrthoDB" id="8251629at2759"/>
<dbReference type="GO" id="GO:0000786">
    <property type="term" value="C:nucleosome"/>
    <property type="evidence" value="ECO:0007669"/>
    <property type="project" value="InterPro"/>
</dbReference>
<dbReference type="GO" id="GO:0005634">
    <property type="term" value="C:nucleus"/>
    <property type="evidence" value="ECO:0007669"/>
    <property type="project" value="UniProtKB-SubCell"/>
</dbReference>
<dbReference type="GO" id="GO:0003690">
    <property type="term" value="F:double-stranded DNA binding"/>
    <property type="evidence" value="ECO:0007669"/>
    <property type="project" value="TreeGrafter"/>
</dbReference>
<dbReference type="GO" id="GO:0031492">
    <property type="term" value="F:nucleosomal DNA binding"/>
    <property type="evidence" value="ECO:0007669"/>
    <property type="project" value="TreeGrafter"/>
</dbReference>
<dbReference type="GO" id="GO:0030527">
    <property type="term" value="F:structural constituent of chromatin"/>
    <property type="evidence" value="ECO:0007669"/>
    <property type="project" value="InterPro"/>
</dbReference>
<dbReference type="GO" id="GO:0030261">
    <property type="term" value="P:chromosome condensation"/>
    <property type="evidence" value="ECO:0007669"/>
    <property type="project" value="TreeGrafter"/>
</dbReference>
<dbReference type="GO" id="GO:0045910">
    <property type="term" value="P:negative regulation of DNA recombination"/>
    <property type="evidence" value="ECO:0007669"/>
    <property type="project" value="TreeGrafter"/>
</dbReference>
<dbReference type="GO" id="GO:0006334">
    <property type="term" value="P:nucleosome assembly"/>
    <property type="evidence" value="ECO:0007669"/>
    <property type="project" value="InterPro"/>
</dbReference>
<dbReference type="CDD" id="cd00073">
    <property type="entry name" value="H15"/>
    <property type="match status" value="1"/>
</dbReference>
<dbReference type="FunFam" id="1.10.10.10:FF:000140">
    <property type="entry name" value="Histone H1.0"/>
    <property type="match status" value="1"/>
</dbReference>
<dbReference type="Gene3D" id="1.10.10.10">
    <property type="entry name" value="Winged helix-like DNA-binding domain superfamily/Winged helix DNA-binding domain"/>
    <property type="match status" value="1"/>
</dbReference>
<dbReference type="InterPro" id="IPR005819">
    <property type="entry name" value="H1/H5"/>
</dbReference>
<dbReference type="InterPro" id="IPR005818">
    <property type="entry name" value="Histone_H1/H5_H15"/>
</dbReference>
<dbReference type="InterPro" id="IPR036388">
    <property type="entry name" value="WH-like_DNA-bd_sf"/>
</dbReference>
<dbReference type="InterPro" id="IPR036390">
    <property type="entry name" value="WH_DNA-bd_sf"/>
</dbReference>
<dbReference type="PANTHER" id="PTHR11467:SF20">
    <property type="entry name" value="H15 DOMAIN-CONTAINING PROTEIN-RELATED"/>
    <property type="match status" value="1"/>
</dbReference>
<dbReference type="PANTHER" id="PTHR11467">
    <property type="entry name" value="HISTONE H1"/>
    <property type="match status" value="1"/>
</dbReference>
<dbReference type="Pfam" id="PF00538">
    <property type="entry name" value="Linker_histone"/>
    <property type="match status" value="1"/>
</dbReference>
<dbReference type="PRINTS" id="PR00624">
    <property type="entry name" value="HISTONEH5"/>
</dbReference>
<dbReference type="SMART" id="SM00526">
    <property type="entry name" value="H15"/>
    <property type="match status" value="1"/>
</dbReference>
<dbReference type="SUPFAM" id="SSF46785">
    <property type="entry name" value="Winged helix' DNA-binding domain"/>
    <property type="match status" value="1"/>
</dbReference>
<dbReference type="PROSITE" id="PS51504">
    <property type="entry name" value="H15"/>
    <property type="match status" value="1"/>
</dbReference>
<reference key="1">
    <citation type="journal article" date="2000" name="J. Mol. Evol.">
        <title>Histone H1 genes and histone gene clusters in the genus Drosophila.</title>
        <authorList>
            <person name="Nagel S."/>
            <person name="Grossbach U."/>
        </authorList>
    </citation>
    <scope>NUCLEOTIDE SEQUENCE [GENOMIC DNA]</scope>
    <source>
        <strain>Bochum</strain>
    </source>
</reference>
<reference key="2">
    <citation type="journal article" date="1998" name="Chromosoma">
        <title>Drosophila virilis has atypical kinds and arrangements of histone repeats.</title>
        <authorList>
            <person name="Schienman J.E."/>
            <person name="Lozovskaya E.R."/>
            <person name="Strausbaugh L.D."/>
        </authorList>
    </citation>
    <scope>DISCUSSION OF SEQUENCE</scope>
</reference>
<gene>
    <name type="primary">His1.2</name>
    <name type="synonym">h1.2</name>
</gene>
<protein>
    <recommendedName>
        <fullName>Histone H1.2</fullName>
    </recommendedName>
</protein>
<evidence type="ECO:0000255" key="1">
    <source>
        <dbReference type="PROSITE-ProRule" id="PRU00837"/>
    </source>
</evidence>
<evidence type="ECO:0000256" key="2">
    <source>
        <dbReference type="SAM" id="MobiDB-lite"/>
    </source>
</evidence>
<proteinExistence type="inferred from homology"/>
<sequence>MSDSAVATSASPVIAQAASGEKKVSTKKAAATPKSKKSTAAPPSHPPTQQMVDASIKNLKERGGSSLLAIKKYIGATYKCDAQKLAPFIKKYLKNAVANGKLIQTKGKGASGSFKLSRSAKKDPKPKASAVEKKTKKVNASAARATKKKSSTSTTKKAAGAADKKLSKSAPTKKSVEKKRADKAKAKDAKKTGTIKAKPTTAKAKSSATKPKTPKPKTKSAKPKKVVSATTPKKTAVKKPKAKTASATKK</sequence>